<sequence>MAFRQPNTKELKVIRKALSYYGSGDFLSHYALLVKEGEKKEVYGVSKELYGVIGELNPHYAGVKIGEVGRRFRFSLEGTFWLLRNSRNRVWVNERGEMLFLYGRDIFAGSVERASEFGENSIVFVCNRFDDVLGIGRSRHSSDELSNLPEDKVFVENLVDRGEYLRHQKTYLSF</sequence>
<evidence type="ECO:0000255" key="1">
    <source>
        <dbReference type="PROSITE-ProRule" id="PRU00161"/>
    </source>
</evidence>
<evidence type="ECO:0000305" key="2"/>
<accession>O30178</accession>
<name>Y058_ARCFU</name>
<proteinExistence type="inferred from homology"/>
<comment type="similarity">
    <text evidence="2">Belongs to the UPF0113 family.</text>
</comment>
<protein>
    <recommendedName>
        <fullName>UPF0113 protein AF_0058</fullName>
    </recommendedName>
</protein>
<keyword id="KW-1185">Reference proteome</keyword>
<organism>
    <name type="scientific">Archaeoglobus fulgidus (strain ATCC 49558 / DSM 4304 / JCM 9628 / NBRC 100126 / VC-16)</name>
    <dbReference type="NCBI Taxonomy" id="224325"/>
    <lineage>
        <taxon>Archaea</taxon>
        <taxon>Methanobacteriati</taxon>
        <taxon>Methanobacteriota</taxon>
        <taxon>Archaeoglobi</taxon>
        <taxon>Archaeoglobales</taxon>
        <taxon>Archaeoglobaceae</taxon>
        <taxon>Archaeoglobus</taxon>
    </lineage>
</organism>
<gene>
    <name type="ordered locus">AF_0058</name>
</gene>
<dbReference type="EMBL" id="AE000782">
    <property type="protein sequence ID" value="AAB91164.1"/>
    <property type="molecule type" value="Genomic_DNA"/>
</dbReference>
<dbReference type="PIR" id="B69257">
    <property type="entry name" value="B69257"/>
</dbReference>
<dbReference type="RefSeq" id="WP_010877572.1">
    <property type="nucleotide sequence ID" value="NC_000917.1"/>
</dbReference>
<dbReference type="SMR" id="O30178"/>
<dbReference type="STRING" id="224325.AF_0058"/>
<dbReference type="PaxDb" id="224325-AF_0058"/>
<dbReference type="EnsemblBacteria" id="AAB91164">
    <property type="protein sequence ID" value="AAB91164"/>
    <property type="gene ID" value="AF_0058"/>
</dbReference>
<dbReference type="GeneID" id="1483267"/>
<dbReference type="KEGG" id="afu:AF_0058"/>
<dbReference type="eggNOG" id="arCOG00993">
    <property type="taxonomic scope" value="Archaea"/>
</dbReference>
<dbReference type="HOGENOM" id="CLU_114385_0_0_2"/>
<dbReference type="OrthoDB" id="11794at2157"/>
<dbReference type="PhylomeDB" id="O30178"/>
<dbReference type="Proteomes" id="UP000002199">
    <property type="component" value="Chromosome"/>
</dbReference>
<dbReference type="GO" id="GO:0003723">
    <property type="term" value="F:RNA binding"/>
    <property type="evidence" value="ECO:0007669"/>
    <property type="project" value="InterPro"/>
</dbReference>
<dbReference type="CDD" id="cd21151">
    <property type="entry name" value="PUA_Nip7-like"/>
    <property type="match status" value="1"/>
</dbReference>
<dbReference type="Gene3D" id="2.30.130.10">
    <property type="entry name" value="PUA domain"/>
    <property type="match status" value="1"/>
</dbReference>
<dbReference type="InterPro" id="IPR040598">
    <property type="entry name" value="NIP7_N"/>
</dbReference>
<dbReference type="InterPro" id="IPR002478">
    <property type="entry name" value="PUA"/>
</dbReference>
<dbReference type="InterPro" id="IPR015947">
    <property type="entry name" value="PUA-like_sf"/>
</dbReference>
<dbReference type="InterPro" id="IPR036974">
    <property type="entry name" value="PUA_sf"/>
</dbReference>
<dbReference type="InterPro" id="IPR005155">
    <property type="entry name" value="UPF0113_PUA"/>
</dbReference>
<dbReference type="Pfam" id="PF17833">
    <property type="entry name" value="pre-PUA_NIP7"/>
    <property type="match status" value="1"/>
</dbReference>
<dbReference type="Pfam" id="PF03657">
    <property type="entry name" value="UPF0113"/>
    <property type="match status" value="1"/>
</dbReference>
<dbReference type="SMART" id="SM00359">
    <property type="entry name" value="PUA"/>
    <property type="match status" value="1"/>
</dbReference>
<dbReference type="SUPFAM" id="SSF88697">
    <property type="entry name" value="PUA domain-like"/>
    <property type="match status" value="1"/>
</dbReference>
<dbReference type="PROSITE" id="PS50890">
    <property type="entry name" value="PUA"/>
    <property type="match status" value="1"/>
</dbReference>
<feature type="chain" id="PRO_0000159747" description="UPF0113 protein AF_0058">
    <location>
        <begin position="1"/>
        <end position="174"/>
    </location>
</feature>
<feature type="domain" description="PUA" evidence="1">
    <location>
        <begin position="87"/>
        <end position="161"/>
    </location>
</feature>
<reference key="1">
    <citation type="journal article" date="1997" name="Nature">
        <title>The complete genome sequence of the hyperthermophilic, sulphate-reducing archaeon Archaeoglobus fulgidus.</title>
        <authorList>
            <person name="Klenk H.-P."/>
            <person name="Clayton R.A."/>
            <person name="Tomb J.-F."/>
            <person name="White O."/>
            <person name="Nelson K.E."/>
            <person name="Ketchum K.A."/>
            <person name="Dodson R.J."/>
            <person name="Gwinn M.L."/>
            <person name="Hickey E.K."/>
            <person name="Peterson J.D."/>
            <person name="Richardson D.L."/>
            <person name="Kerlavage A.R."/>
            <person name="Graham D.E."/>
            <person name="Kyrpides N.C."/>
            <person name="Fleischmann R.D."/>
            <person name="Quackenbush J."/>
            <person name="Lee N.H."/>
            <person name="Sutton G.G."/>
            <person name="Gill S.R."/>
            <person name="Kirkness E.F."/>
            <person name="Dougherty B.A."/>
            <person name="McKenney K."/>
            <person name="Adams M.D."/>
            <person name="Loftus B.J."/>
            <person name="Peterson S.N."/>
            <person name="Reich C.I."/>
            <person name="McNeil L.K."/>
            <person name="Badger J.H."/>
            <person name="Glodek A."/>
            <person name="Zhou L."/>
            <person name="Overbeek R."/>
            <person name="Gocayne J.D."/>
            <person name="Weidman J.F."/>
            <person name="McDonald L.A."/>
            <person name="Utterback T.R."/>
            <person name="Cotton M.D."/>
            <person name="Spriggs T."/>
            <person name="Artiach P."/>
            <person name="Kaine B.P."/>
            <person name="Sykes S.M."/>
            <person name="Sadow P.W."/>
            <person name="D'Andrea K.P."/>
            <person name="Bowman C."/>
            <person name="Fujii C."/>
            <person name="Garland S.A."/>
            <person name="Mason T.M."/>
            <person name="Olsen G.J."/>
            <person name="Fraser C.M."/>
            <person name="Smith H.O."/>
            <person name="Woese C.R."/>
            <person name="Venter J.C."/>
        </authorList>
    </citation>
    <scope>NUCLEOTIDE SEQUENCE [LARGE SCALE GENOMIC DNA]</scope>
    <source>
        <strain>ATCC 49558 / DSM 4304 / JCM 9628 / NBRC 100126 / VC-16</strain>
    </source>
</reference>